<keyword id="KW-1003">Cell membrane</keyword>
<keyword id="KW-0449">Lipoprotein</keyword>
<keyword id="KW-0472">Membrane</keyword>
<keyword id="KW-0564">Palmitate</keyword>
<keyword id="KW-1185">Reference proteome</keyword>
<keyword id="KW-0732">Signal</keyword>
<feature type="signal peptide" evidence="1">
    <location>
        <begin position="1"/>
        <end position="16"/>
    </location>
</feature>
<feature type="chain" id="PRO_0000018180" description="Membrane-bound protein LytA">
    <location>
        <begin position="17"/>
        <end position="102"/>
    </location>
</feature>
<feature type="lipid moiety-binding region" description="N-palmitoyl cysteine" evidence="1">
    <location>
        <position position="17"/>
    </location>
</feature>
<feature type="lipid moiety-binding region" description="S-diacylglycerol cysteine" evidence="1">
    <location>
        <position position="17"/>
    </location>
</feature>
<accession>Q02112</accession>
<dbReference type="EMBL" id="M87645">
    <property type="protein sequence ID" value="AAA22579.1"/>
    <property type="molecule type" value="Genomic_DNA"/>
</dbReference>
<dbReference type="EMBL" id="D10388">
    <property type="protein sequence ID" value="BAA01223.1"/>
    <property type="molecule type" value="Genomic_DNA"/>
</dbReference>
<dbReference type="EMBL" id="AL009126">
    <property type="protein sequence ID" value="CAB15581.1"/>
    <property type="molecule type" value="Genomic_DNA"/>
</dbReference>
<dbReference type="PIR" id="B47679">
    <property type="entry name" value="B47679"/>
</dbReference>
<dbReference type="RefSeq" id="NP_391444.1">
    <property type="nucleotide sequence ID" value="NC_000964.3"/>
</dbReference>
<dbReference type="RefSeq" id="WP_003242772.1">
    <property type="nucleotide sequence ID" value="NZ_OZ025638.1"/>
</dbReference>
<dbReference type="SMR" id="Q02112"/>
<dbReference type="FunCoup" id="Q02112">
    <property type="interactions" value="37"/>
</dbReference>
<dbReference type="STRING" id="224308.BSU35640"/>
<dbReference type="PaxDb" id="224308-BSU35640"/>
<dbReference type="EnsemblBacteria" id="CAB15581">
    <property type="protein sequence ID" value="CAB15581"/>
    <property type="gene ID" value="BSU_35640"/>
</dbReference>
<dbReference type="GeneID" id="936784"/>
<dbReference type="KEGG" id="bsu:BSU35640"/>
<dbReference type="PATRIC" id="fig|224308.179.peg.3855"/>
<dbReference type="InParanoid" id="Q02112"/>
<dbReference type="OrthoDB" id="2937293at2"/>
<dbReference type="BioCyc" id="BSUB:BSU35640-MONOMER"/>
<dbReference type="Proteomes" id="UP000001570">
    <property type="component" value="Chromosome"/>
</dbReference>
<dbReference type="GO" id="GO:0005886">
    <property type="term" value="C:plasma membrane"/>
    <property type="evidence" value="ECO:0007669"/>
    <property type="project" value="UniProtKB-SubCell"/>
</dbReference>
<dbReference type="PROSITE" id="PS51257">
    <property type="entry name" value="PROKAR_LIPOPROTEIN"/>
    <property type="match status" value="1"/>
</dbReference>
<proteinExistence type="evidence at transcript level"/>
<comment type="function">
    <text>Possible role in the secretion of LytB and LytC.</text>
</comment>
<comment type="subcellular location">
    <subcellularLocation>
        <location evidence="3">Cell membrane</location>
        <topology evidence="3">Lipid-anchor</topology>
    </subcellularLocation>
</comment>
<comment type="induction">
    <text evidence="2">Repressed by LytR.</text>
</comment>
<sequence length="102" mass="11228">MKKFIALLFFILLLSGCGVNSQKSQGEDVSPDSNIETKEGTYVGLADTHTIEVTVDNEPVSLDITEESTSDLDKFNSGDKVTITYEKNDEGQLLLKDIERAN</sequence>
<organism>
    <name type="scientific">Bacillus subtilis (strain 168)</name>
    <dbReference type="NCBI Taxonomy" id="224308"/>
    <lineage>
        <taxon>Bacteria</taxon>
        <taxon>Bacillati</taxon>
        <taxon>Bacillota</taxon>
        <taxon>Bacilli</taxon>
        <taxon>Bacillales</taxon>
        <taxon>Bacillaceae</taxon>
        <taxon>Bacillus</taxon>
    </lineage>
</organism>
<reference key="1">
    <citation type="journal article" date="1992" name="J. Gen. Microbiol.">
        <title>Sequencing and analysis of the Bacillus subtilis lytRABC divergon: a regulatory unit encompassing the structural genes of the N-acetylmuramoyl-L-alanine amidase and its modifier.</title>
        <authorList>
            <person name="Lazarevic V."/>
            <person name="Margot P."/>
            <person name="Soldo B."/>
            <person name="Karamata D."/>
        </authorList>
    </citation>
    <scope>NUCLEOTIDE SEQUENCE [GENOMIC DNA]</scope>
    <scope>REPRESSION BY LYTR</scope>
    <source>
        <strain>168</strain>
    </source>
</reference>
<reference key="2">
    <citation type="journal article" date="1992" name="J. Gen. Microbiol.">
        <title>Molecular cloning and sequencing of the upstream region of the major Bacillus subtilis autolysin gene: a modifier protein exhibiting sequence homology to the major autolysin and the spoIID product.</title>
        <authorList>
            <person name="Kuroda A."/>
            <person name="Rashid H.M."/>
            <person name="Sekiguchi J."/>
        </authorList>
    </citation>
    <scope>NUCLEOTIDE SEQUENCE [GENOMIC DNA]</scope>
</reference>
<reference key="3">
    <citation type="journal article" date="1997" name="Nature">
        <title>The complete genome sequence of the Gram-positive bacterium Bacillus subtilis.</title>
        <authorList>
            <person name="Kunst F."/>
            <person name="Ogasawara N."/>
            <person name="Moszer I."/>
            <person name="Albertini A.M."/>
            <person name="Alloni G."/>
            <person name="Azevedo V."/>
            <person name="Bertero M.G."/>
            <person name="Bessieres P."/>
            <person name="Bolotin A."/>
            <person name="Borchert S."/>
            <person name="Borriss R."/>
            <person name="Boursier L."/>
            <person name="Brans A."/>
            <person name="Braun M."/>
            <person name="Brignell S.C."/>
            <person name="Bron S."/>
            <person name="Brouillet S."/>
            <person name="Bruschi C.V."/>
            <person name="Caldwell B."/>
            <person name="Capuano V."/>
            <person name="Carter N.M."/>
            <person name="Choi S.-K."/>
            <person name="Codani J.-J."/>
            <person name="Connerton I.F."/>
            <person name="Cummings N.J."/>
            <person name="Daniel R.A."/>
            <person name="Denizot F."/>
            <person name="Devine K.M."/>
            <person name="Duesterhoeft A."/>
            <person name="Ehrlich S.D."/>
            <person name="Emmerson P.T."/>
            <person name="Entian K.-D."/>
            <person name="Errington J."/>
            <person name="Fabret C."/>
            <person name="Ferrari E."/>
            <person name="Foulger D."/>
            <person name="Fritz C."/>
            <person name="Fujita M."/>
            <person name="Fujita Y."/>
            <person name="Fuma S."/>
            <person name="Galizzi A."/>
            <person name="Galleron N."/>
            <person name="Ghim S.-Y."/>
            <person name="Glaser P."/>
            <person name="Goffeau A."/>
            <person name="Golightly E.J."/>
            <person name="Grandi G."/>
            <person name="Guiseppi G."/>
            <person name="Guy B.J."/>
            <person name="Haga K."/>
            <person name="Haiech J."/>
            <person name="Harwood C.R."/>
            <person name="Henaut A."/>
            <person name="Hilbert H."/>
            <person name="Holsappel S."/>
            <person name="Hosono S."/>
            <person name="Hullo M.-F."/>
            <person name="Itaya M."/>
            <person name="Jones L.-M."/>
            <person name="Joris B."/>
            <person name="Karamata D."/>
            <person name="Kasahara Y."/>
            <person name="Klaerr-Blanchard M."/>
            <person name="Klein C."/>
            <person name="Kobayashi Y."/>
            <person name="Koetter P."/>
            <person name="Koningstein G."/>
            <person name="Krogh S."/>
            <person name="Kumano M."/>
            <person name="Kurita K."/>
            <person name="Lapidus A."/>
            <person name="Lardinois S."/>
            <person name="Lauber J."/>
            <person name="Lazarevic V."/>
            <person name="Lee S.-M."/>
            <person name="Levine A."/>
            <person name="Liu H."/>
            <person name="Masuda S."/>
            <person name="Mauel C."/>
            <person name="Medigue C."/>
            <person name="Medina N."/>
            <person name="Mellado R.P."/>
            <person name="Mizuno M."/>
            <person name="Moestl D."/>
            <person name="Nakai S."/>
            <person name="Noback M."/>
            <person name="Noone D."/>
            <person name="O'Reilly M."/>
            <person name="Ogawa K."/>
            <person name="Ogiwara A."/>
            <person name="Oudega B."/>
            <person name="Park S.-H."/>
            <person name="Parro V."/>
            <person name="Pohl T.M."/>
            <person name="Portetelle D."/>
            <person name="Porwollik S."/>
            <person name="Prescott A.M."/>
            <person name="Presecan E."/>
            <person name="Pujic P."/>
            <person name="Purnelle B."/>
            <person name="Rapoport G."/>
            <person name="Rey M."/>
            <person name="Reynolds S."/>
            <person name="Rieger M."/>
            <person name="Rivolta C."/>
            <person name="Rocha E."/>
            <person name="Roche B."/>
            <person name="Rose M."/>
            <person name="Sadaie Y."/>
            <person name="Sato T."/>
            <person name="Scanlan E."/>
            <person name="Schleich S."/>
            <person name="Schroeter R."/>
            <person name="Scoffone F."/>
            <person name="Sekiguchi J."/>
            <person name="Sekowska A."/>
            <person name="Seror S.J."/>
            <person name="Serror P."/>
            <person name="Shin B.-S."/>
            <person name="Soldo B."/>
            <person name="Sorokin A."/>
            <person name="Tacconi E."/>
            <person name="Takagi T."/>
            <person name="Takahashi H."/>
            <person name="Takemaru K."/>
            <person name="Takeuchi M."/>
            <person name="Tamakoshi A."/>
            <person name="Tanaka T."/>
            <person name="Terpstra P."/>
            <person name="Tognoni A."/>
            <person name="Tosato V."/>
            <person name="Uchiyama S."/>
            <person name="Vandenbol M."/>
            <person name="Vannier F."/>
            <person name="Vassarotti A."/>
            <person name="Viari A."/>
            <person name="Wambutt R."/>
            <person name="Wedler E."/>
            <person name="Wedler H."/>
            <person name="Weitzenegger T."/>
            <person name="Winters P."/>
            <person name="Wipat A."/>
            <person name="Yamamoto H."/>
            <person name="Yamane K."/>
            <person name="Yasumoto K."/>
            <person name="Yata K."/>
            <person name="Yoshida K."/>
            <person name="Yoshikawa H.-F."/>
            <person name="Zumstein E."/>
            <person name="Yoshikawa H."/>
            <person name="Danchin A."/>
        </authorList>
    </citation>
    <scope>NUCLEOTIDE SEQUENCE [LARGE SCALE GENOMIC DNA]</scope>
    <source>
        <strain>168</strain>
    </source>
</reference>
<gene>
    <name type="primary">lytA</name>
    <name type="synonym">lppX</name>
    <name type="ordered locus">BSU35640</name>
</gene>
<protein>
    <recommendedName>
        <fullName>Membrane-bound protein LytA</fullName>
    </recommendedName>
</protein>
<name>LYTA_BACSU</name>
<evidence type="ECO:0000255" key="1">
    <source>
        <dbReference type="PROSITE-ProRule" id="PRU00303"/>
    </source>
</evidence>
<evidence type="ECO:0000269" key="2">
    <source>
    </source>
</evidence>
<evidence type="ECO:0000305" key="3"/>